<feature type="chain" id="PRO_0000156079" description="Translation initiation factor eIF2B subunit gamma">
    <location>
        <begin position="1"/>
        <end position="452"/>
    </location>
</feature>
<feature type="modified residue" description="N-acetylmethionine" evidence="8 14 15">
    <location>
        <position position="1"/>
    </location>
</feature>
<feature type="modified residue" description="Phosphoserine" evidence="16">
    <location>
        <position position="260"/>
    </location>
</feature>
<feature type="splice variant" id="VSP_001436" description="In isoform 2." evidence="10">
    <original>SNIQGSVICNNAVIEKGADIKDCLIGSGQRIEAKAKRVNEVIVGNDQLMEI</original>
    <variation>YVSPCTHLRQR</variation>
    <location>
        <begin position="402"/>
        <end position="452"/>
    </location>
</feature>
<feature type="splice variant" id="VSP_001435" description="In isoform 3." evidence="9">
    <location>
        <begin position="402"/>
        <end position="452"/>
    </location>
</feature>
<feature type="sequence variant" id="VAR_068470" description="In VWM3; dbSNP:rs397514647." evidence="4">
    <original>L</original>
    <variation>Q</variation>
    <location>
        <position position="27"/>
    </location>
</feature>
<feature type="sequence variant" id="VAR_068471" description="In VWM3." evidence="3">
    <original>G</original>
    <variation>E</variation>
    <location>
        <position position="47"/>
    </location>
</feature>
<feature type="sequence variant" id="VAR_015409" description="In VWM3; dbSNP:rs113994022." evidence="2">
    <original>A</original>
    <variation>V</variation>
    <location>
        <position position="87"/>
    </location>
</feature>
<feature type="sequence variant" id="VAR_015410" description="In VWM3; dbSNP:rs113994024." evidence="2 3">
    <original>R</original>
    <variation>Q</variation>
    <location>
        <position position="225"/>
    </location>
</feature>
<feature type="sequence variant" id="VAR_048920" description="In dbSNP:rs3738247.">
    <original>D</original>
    <variation>E</variation>
    <location>
        <position position="288"/>
    </location>
</feature>
<feature type="sequence variant" id="VAR_068472" description="In VWM3; dbSNP:rs119474039." evidence="3">
    <original>I</original>
    <variation>T</variation>
    <location>
        <position position="346"/>
    </location>
</feature>
<feature type="sequence conflict" description="In Ref. 2; BAB14770." evidence="11" ref="2">
    <original>S</original>
    <variation>G</variation>
    <location>
        <position position="356"/>
    </location>
</feature>
<feature type="strand" evidence="21">
    <location>
        <begin position="4"/>
        <end position="8"/>
    </location>
</feature>
<feature type="helix" evidence="20">
    <location>
        <begin position="25"/>
        <end position="27"/>
    </location>
</feature>
<feature type="strand" evidence="21">
    <location>
        <begin position="31"/>
        <end position="33"/>
    </location>
</feature>
<feature type="helix" evidence="21">
    <location>
        <begin position="37"/>
        <end position="46"/>
    </location>
</feature>
<feature type="strand" evidence="21">
    <location>
        <begin position="51"/>
        <end position="55"/>
    </location>
</feature>
<feature type="helix" evidence="21">
    <location>
        <begin position="63"/>
        <end position="67"/>
    </location>
</feature>
<feature type="strand" evidence="21">
    <location>
        <begin position="75"/>
        <end position="79"/>
    </location>
</feature>
<feature type="helix" evidence="21">
    <location>
        <begin position="86"/>
        <end position="92"/>
    </location>
</feature>
<feature type="helix" evidence="21">
    <location>
        <begin position="93"/>
        <end position="96"/>
    </location>
</feature>
<feature type="strand" evidence="21">
    <location>
        <begin position="101"/>
        <end position="105"/>
    </location>
</feature>
<feature type="helix" evidence="21">
    <location>
        <begin position="115"/>
        <end position="123"/>
    </location>
</feature>
<feature type="strand" evidence="21">
    <location>
        <begin position="127"/>
        <end position="134"/>
    </location>
</feature>
<feature type="strand" evidence="21">
    <location>
        <begin position="156"/>
        <end position="160"/>
    </location>
</feature>
<feature type="strand" evidence="18">
    <location>
        <begin position="161"/>
        <end position="164"/>
    </location>
</feature>
<feature type="strand" evidence="21">
    <location>
        <begin position="166"/>
        <end position="172"/>
    </location>
</feature>
<feature type="helix" evidence="21">
    <location>
        <begin position="173"/>
        <end position="175"/>
    </location>
</feature>
<feature type="strand" evidence="19">
    <location>
        <begin position="177"/>
        <end position="179"/>
    </location>
</feature>
<feature type="strand" evidence="21">
    <location>
        <begin position="180"/>
        <end position="183"/>
    </location>
</feature>
<feature type="helix" evidence="21">
    <location>
        <begin position="184"/>
        <end position="189"/>
    </location>
</feature>
<feature type="strand" evidence="21">
    <location>
        <begin position="192"/>
        <end position="207"/>
    </location>
</feature>
<feature type="helix" evidence="21">
    <location>
        <begin position="209"/>
        <end position="217"/>
    </location>
</feature>
<feature type="turn" evidence="21">
    <location>
        <begin position="224"/>
        <end position="227"/>
    </location>
</feature>
<feature type="helix" evidence="21">
    <location>
        <begin position="228"/>
        <end position="235"/>
    </location>
</feature>
<feature type="strand" evidence="21">
    <location>
        <begin position="263"/>
        <end position="270"/>
    </location>
</feature>
<feature type="strand" evidence="17">
    <location>
        <begin position="272"/>
        <end position="275"/>
    </location>
</feature>
<feature type="helix" evidence="21">
    <location>
        <begin position="278"/>
        <end position="280"/>
    </location>
</feature>
<feature type="helix" evidence="21">
    <location>
        <begin position="281"/>
        <end position="292"/>
    </location>
</feature>
<feature type="strand" evidence="20">
    <location>
        <begin position="300"/>
        <end position="304"/>
    </location>
</feature>
<feature type="strand" evidence="20">
    <location>
        <begin position="306"/>
        <end position="308"/>
    </location>
</feature>
<feature type="helix" evidence="20">
    <location>
        <begin position="316"/>
        <end position="333"/>
    </location>
</feature>
<feature type="strand" evidence="22">
    <location>
        <begin position="339"/>
        <end position="341"/>
    </location>
</feature>
<feature type="strand" evidence="22">
    <location>
        <begin position="353"/>
        <end position="355"/>
    </location>
</feature>
<feature type="strand" evidence="22">
    <location>
        <begin position="369"/>
        <end position="372"/>
    </location>
</feature>
<feature type="strand" evidence="22">
    <location>
        <begin position="386"/>
        <end position="389"/>
    </location>
</feature>
<feature type="strand" evidence="22">
    <location>
        <begin position="403"/>
        <end position="406"/>
    </location>
</feature>
<feature type="strand" evidence="22">
    <location>
        <begin position="420"/>
        <end position="423"/>
    </location>
</feature>
<feature type="strand" evidence="22">
    <location>
        <begin position="434"/>
        <end position="437"/>
    </location>
</feature>
<gene>
    <name type="primary">EIF2B3</name>
</gene>
<evidence type="ECO:0000250" key="1">
    <source>
        <dbReference type="UniProtKB" id="P56288"/>
    </source>
</evidence>
<evidence type="ECO:0000269" key="2">
    <source>
    </source>
</evidence>
<evidence type="ECO:0000269" key="3">
    <source>
    </source>
</evidence>
<evidence type="ECO:0000269" key="4">
    <source>
    </source>
</evidence>
<evidence type="ECO:0000269" key="5">
    <source>
    </source>
</evidence>
<evidence type="ECO:0000269" key="6">
    <source>
    </source>
</evidence>
<evidence type="ECO:0000269" key="7">
    <source>
    </source>
</evidence>
<evidence type="ECO:0000269" key="8">
    <source ref="7"/>
</evidence>
<evidence type="ECO:0000303" key="9">
    <source>
    </source>
</evidence>
<evidence type="ECO:0000303" key="10">
    <source>
    </source>
</evidence>
<evidence type="ECO:0000305" key="11"/>
<evidence type="ECO:0007744" key="12">
    <source>
        <dbReference type="PDB" id="6K71"/>
    </source>
</evidence>
<evidence type="ECO:0007744" key="13">
    <source>
        <dbReference type="PDB" id="6K72"/>
    </source>
</evidence>
<evidence type="ECO:0007744" key="14">
    <source>
    </source>
</evidence>
<evidence type="ECO:0007744" key="15">
    <source>
    </source>
</evidence>
<evidence type="ECO:0007744" key="16">
    <source>
    </source>
</evidence>
<evidence type="ECO:0007829" key="17">
    <source>
        <dbReference type="PDB" id="6CAJ"/>
    </source>
</evidence>
<evidence type="ECO:0007829" key="18">
    <source>
        <dbReference type="PDB" id="7L70"/>
    </source>
</evidence>
<evidence type="ECO:0007829" key="19">
    <source>
        <dbReference type="PDB" id="7L7G"/>
    </source>
</evidence>
<evidence type="ECO:0007829" key="20">
    <source>
        <dbReference type="PDB" id="7RLO"/>
    </source>
</evidence>
<evidence type="ECO:0007829" key="21">
    <source>
        <dbReference type="PDB" id="7VLK"/>
    </source>
</evidence>
<evidence type="ECO:0007829" key="22">
    <source>
        <dbReference type="PDB" id="8TQO"/>
    </source>
</evidence>
<reference key="1">
    <citation type="journal article" date="2000" name="Proc. Natl. Acad. Sci. U.S.A.">
        <title>Identification of eIF2B gamma and eIF2 gamma as cofactors of hepatitis C virus internal ribosome entry site-mediated translation using a functional genomics approach.</title>
        <authorList>
            <person name="Krueger M."/>
            <person name="Beger C."/>
            <person name="Li Q.-X."/>
            <person name="Welch P.J."/>
            <person name="Tritz R."/>
            <person name="Leavitt M."/>
            <person name="Barber J.R."/>
            <person name="Wong-Staal F."/>
        </authorList>
    </citation>
    <scope>NUCLEOTIDE SEQUENCE [MRNA] (ISOFORM 1)</scope>
</reference>
<reference key="2">
    <citation type="journal article" date="2004" name="Nat. Genet.">
        <title>Complete sequencing and characterization of 21,243 full-length human cDNAs.</title>
        <authorList>
            <person name="Ota T."/>
            <person name="Suzuki Y."/>
            <person name="Nishikawa T."/>
            <person name="Otsuki T."/>
            <person name="Sugiyama T."/>
            <person name="Irie R."/>
            <person name="Wakamatsu A."/>
            <person name="Hayashi K."/>
            <person name="Sato H."/>
            <person name="Nagai K."/>
            <person name="Kimura K."/>
            <person name="Makita H."/>
            <person name="Sekine M."/>
            <person name="Obayashi M."/>
            <person name="Nishi T."/>
            <person name="Shibahara T."/>
            <person name="Tanaka T."/>
            <person name="Ishii S."/>
            <person name="Yamamoto J."/>
            <person name="Saito K."/>
            <person name="Kawai Y."/>
            <person name="Isono Y."/>
            <person name="Nakamura Y."/>
            <person name="Nagahari K."/>
            <person name="Murakami K."/>
            <person name="Yasuda T."/>
            <person name="Iwayanagi T."/>
            <person name="Wagatsuma M."/>
            <person name="Shiratori A."/>
            <person name="Sudo H."/>
            <person name="Hosoiri T."/>
            <person name="Kaku Y."/>
            <person name="Kodaira H."/>
            <person name="Kondo H."/>
            <person name="Sugawara M."/>
            <person name="Takahashi M."/>
            <person name="Kanda K."/>
            <person name="Yokoi T."/>
            <person name="Furuya T."/>
            <person name="Kikkawa E."/>
            <person name="Omura Y."/>
            <person name="Abe K."/>
            <person name="Kamihara K."/>
            <person name="Katsuta N."/>
            <person name="Sato K."/>
            <person name="Tanikawa M."/>
            <person name="Yamazaki M."/>
            <person name="Ninomiya K."/>
            <person name="Ishibashi T."/>
            <person name="Yamashita H."/>
            <person name="Murakawa K."/>
            <person name="Fujimori K."/>
            <person name="Tanai H."/>
            <person name="Kimata M."/>
            <person name="Watanabe M."/>
            <person name="Hiraoka S."/>
            <person name="Chiba Y."/>
            <person name="Ishida S."/>
            <person name="Ono Y."/>
            <person name="Takiguchi S."/>
            <person name="Watanabe S."/>
            <person name="Yosida M."/>
            <person name="Hotuta T."/>
            <person name="Kusano J."/>
            <person name="Kanehori K."/>
            <person name="Takahashi-Fujii A."/>
            <person name="Hara H."/>
            <person name="Tanase T.-O."/>
            <person name="Nomura Y."/>
            <person name="Togiya S."/>
            <person name="Komai F."/>
            <person name="Hara R."/>
            <person name="Takeuchi K."/>
            <person name="Arita M."/>
            <person name="Imose N."/>
            <person name="Musashino K."/>
            <person name="Yuuki H."/>
            <person name="Oshima A."/>
            <person name="Sasaki N."/>
            <person name="Aotsuka S."/>
            <person name="Yoshikawa Y."/>
            <person name="Matsunawa H."/>
            <person name="Ichihara T."/>
            <person name="Shiohata N."/>
            <person name="Sano S."/>
            <person name="Moriya S."/>
            <person name="Momiyama H."/>
            <person name="Satoh N."/>
            <person name="Takami S."/>
            <person name="Terashima Y."/>
            <person name="Suzuki O."/>
            <person name="Nakagawa S."/>
            <person name="Senoh A."/>
            <person name="Mizoguchi H."/>
            <person name="Goto Y."/>
            <person name="Shimizu F."/>
            <person name="Wakebe H."/>
            <person name="Hishigaki H."/>
            <person name="Watanabe T."/>
            <person name="Sugiyama A."/>
            <person name="Takemoto M."/>
            <person name="Kawakami B."/>
            <person name="Yamazaki M."/>
            <person name="Watanabe K."/>
            <person name="Kumagai A."/>
            <person name="Itakura S."/>
            <person name="Fukuzumi Y."/>
            <person name="Fujimori Y."/>
            <person name="Komiyama M."/>
            <person name="Tashiro H."/>
            <person name="Tanigami A."/>
            <person name="Fujiwara T."/>
            <person name="Ono T."/>
            <person name="Yamada K."/>
            <person name="Fujii Y."/>
            <person name="Ozaki K."/>
            <person name="Hirao M."/>
            <person name="Ohmori Y."/>
            <person name="Kawabata A."/>
            <person name="Hikiji T."/>
            <person name="Kobatake N."/>
            <person name="Inagaki H."/>
            <person name="Ikema Y."/>
            <person name="Okamoto S."/>
            <person name="Okitani R."/>
            <person name="Kawakami T."/>
            <person name="Noguchi S."/>
            <person name="Itoh T."/>
            <person name="Shigeta K."/>
            <person name="Senba T."/>
            <person name="Matsumura K."/>
            <person name="Nakajima Y."/>
            <person name="Mizuno T."/>
            <person name="Morinaga M."/>
            <person name="Sasaki M."/>
            <person name="Togashi T."/>
            <person name="Oyama M."/>
            <person name="Hata H."/>
            <person name="Watanabe M."/>
            <person name="Komatsu T."/>
            <person name="Mizushima-Sugano J."/>
            <person name="Satoh T."/>
            <person name="Shirai Y."/>
            <person name="Takahashi Y."/>
            <person name="Nakagawa K."/>
            <person name="Okumura K."/>
            <person name="Nagase T."/>
            <person name="Nomura N."/>
            <person name="Kikuchi H."/>
            <person name="Masuho Y."/>
            <person name="Yamashita R."/>
            <person name="Nakai K."/>
            <person name="Yada T."/>
            <person name="Nakamura Y."/>
            <person name="Ohara O."/>
            <person name="Isogai T."/>
            <person name="Sugano S."/>
        </authorList>
    </citation>
    <scope>NUCLEOTIDE SEQUENCE [LARGE SCALE MRNA] (ISOFORM 1)</scope>
    <source>
        <tissue>Testis</tissue>
    </source>
</reference>
<reference key="3">
    <citation type="journal article" date="2007" name="BMC Genomics">
        <title>The full-ORF clone resource of the German cDNA consortium.</title>
        <authorList>
            <person name="Bechtel S."/>
            <person name="Rosenfelder H."/>
            <person name="Duda A."/>
            <person name="Schmidt C.P."/>
            <person name="Ernst U."/>
            <person name="Wellenreuther R."/>
            <person name="Mehrle A."/>
            <person name="Schuster C."/>
            <person name="Bahr A."/>
            <person name="Bloecker H."/>
            <person name="Heubner D."/>
            <person name="Hoerlein A."/>
            <person name="Michel G."/>
            <person name="Wedler H."/>
            <person name="Koehrer K."/>
            <person name="Ottenwaelder B."/>
            <person name="Poustka A."/>
            <person name="Wiemann S."/>
            <person name="Schupp I."/>
        </authorList>
    </citation>
    <scope>NUCLEOTIDE SEQUENCE [LARGE SCALE MRNA] (ISOFORM 2)</scope>
    <source>
        <tissue>Lymph node</tissue>
    </source>
</reference>
<reference key="4">
    <citation type="journal article" date="2006" name="Nature">
        <title>The DNA sequence and biological annotation of human chromosome 1.</title>
        <authorList>
            <person name="Gregory S.G."/>
            <person name="Barlow K.F."/>
            <person name="McLay K.E."/>
            <person name="Kaul R."/>
            <person name="Swarbreck D."/>
            <person name="Dunham A."/>
            <person name="Scott C.E."/>
            <person name="Howe K.L."/>
            <person name="Woodfine K."/>
            <person name="Spencer C.C.A."/>
            <person name="Jones M.C."/>
            <person name="Gillson C."/>
            <person name="Searle S."/>
            <person name="Zhou Y."/>
            <person name="Kokocinski F."/>
            <person name="McDonald L."/>
            <person name="Evans R."/>
            <person name="Phillips K."/>
            <person name="Atkinson A."/>
            <person name="Cooper R."/>
            <person name="Jones C."/>
            <person name="Hall R.E."/>
            <person name="Andrews T.D."/>
            <person name="Lloyd C."/>
            <person name="Ainscough R."/>
            <person name="Almeida J.P."/>
            <person name="Ambrose K.D."/>
            <person name="Anderson F."/>
            <person name="Andrew R.W."/>
            <person name="Ashwell R.I.S."/>
            <person name="Aubin K."/>
            <person name="Babbage A.K."/>
            <person name="Bagguley C.L."/>
            <person name="Bailey J."/>
            <person name="Beasley H."/>
            <person name="Bethel G."/>
            <person name="Bird C.P."/>
            <person name="Bray-Allen S."/>
            <person name="Brown J.Y."/>
            <person name="Brown A.J."/>
            <person name="Buckley D."/>
            <person name="Burton J."/>
            <person name="Bye J."/>
            <person name="Carder C."/>
            <person name="Chapman J.C."/>
            <person name="Clark S.Y."/>
            <person name="Clarke G."/>
            <person name="Clee C."/>
            <person name="Cobley V."/>
            <person name="Collier R.E."/>
            <person name="Corby N."/>
            <person name="Coville G.J."/>
            <person name="Davies J."/>
            <person name="Deadman R."/>
            <person name="Dunn M."/>
            <person name="Earthrowl M."/>
            <person name="Ellington A.G."/>
            <person name="Errington H."/>
            <person name="Frankish A."/>
            <person name="Frankland J."/>
            <person name="French L."/>
            <person name="Garner P."/>
            <person name="Garnett J."/>
            <person name="Gay L."/>
            <person name="Ghori M.R.J."/>
            <person name="Gibson R."/>
            <person name="Gilby L.M."/>
            <person name="Gillett W."/>
            <person name="Glithero R.J."/>
            <person name="Grafham D.V."/>
            <person name="Griffiths C."/>
            <person name="Griffiths-Jones S."/>
            <person name="Grocock R."/>
            <person name="Hammond S."/>
            <person name="Harrison E.S.I."/>
            <person name="Hart E."/>
            <person name="Haugen E."/>
            <person name="Heath P.D."/>
            <person name="Holmes S."/>
            <person name="Holt K."/>
            <person name="Howden P.J."/>
            <person name="Hunt A.R."/>
            <person name="Hunt S.E."/>
            <person name="Hunter G."/>
            <person name="Isherwood J."/>
            <person name="James R."/>
            <person name="Johnson C."/>
            <person name="Johnson D."/>
            <person name="Joy A."/>
            <person name="Kay M."/>
            <person name="Kershaw J.K."/>
            <person name="Kibukawa M."/>
            <person name="Kimberley A.M."/>
            <person name="King A."/>
            <person name="Knights A.J."/>
            <person name="Lad H."/>
            <person name="Laird G."/>
            <person name="Lawlor S."/>
            <person name="Leongamornlert D.A."/>
            <person name="Lloyd D.M."/>
            <person name="Loveland J."/>
            <person name="Lovell J."/>
            <person name="Lush M.J."/>
            <person name="Lyne R."/>
            <person name="Martin S."/>
            <person name="Mashreghi-Mohammadi M."/>
            <person name="Matthews L."/>
            <person name="Matthews N.S.W."/>
            <person name="McLaren S."/>
            <person name="Milne S."/>
            <person name="Mistry S."/>
            <person name="Moore M.J.F."/>
            <person name="Nickerson T."/>
            <person name="O'Dell C.N."/>
            <person name="Oliver K."/>
            <person name="Palmeiri A."/>
            <person name="Palmer S.A."/>
            <person name="Parker A."/>
            <person name="Patel D."/>
            <person name="Pearce A.V."/>
            <person name="Peck A.I."/>
            <person name="Pelan S."/>
            <person name="Phelps K."/>
            <person name="Phillimore B.J."/>
            <person name="Plumb R."/>
            <person name="Rajan J."/>
            <person name="Raymond C."/>
            <person name="Rouse G."/>
            <person name="Saenphimmachak C."/>
            <person name="Sehra H.K."/>
            <person name="Sheridan E."/>
            <person name="Shownkeen R."/>
            <person name="Sims S."/>
            <person name="Skuce C.D."/>
            <person name="Smith M."/>
            <person name="Steward C."/>
            <person name="Subramanian S."/>
            <person name="Sycamore N."/>
            <person name="Tracey A."/>
            <person name="Tromans A."/>
            <person name="Van Helmond Z."/>
            <person name="Wall M."/>
            <person name="Wallis J.M."/>
            <person name="White S."/>
            <person name="Whitehead S.L."/>
            <person name="Wilkinson J.E."/>
            <person name="Willey D.L."/>
            <person name="Williams H."/>
            <person name="Wilming L."/>
            <person name="Wray P.W."/>
            <person name="Wu Z."/>
            <person name="Coulson A."/>
            <person name="Vaudin M."/>
            <person name="Sulston J.E."/>
            <person name="Durbin R.M."/>
            <person name="Hubbard T."/>
            <person name="Wooster R."/>
            <person name="Dunham I."/>
            <person name="Carter N.P."/>
            <person name="McVean G."/>
            <person name="Ross M.T."/>
            <person name="Harrow J."/>
            <person name="Olson M.V."/>
            <person name="Beck S."/>
            <person name="Rogers J."/>
            <person name="Bentley D.R."/>
        </authorList>
    </citation>
    <scope>NUCLEOTIDE SEQUENCE [LARGE SCALE GENOMIC DNA]</scope>
</reference>
<reference key="5">
    <citation type="submission" date="2005-09" db="EMBL/GenBank/DDBJ databases">
        <authorList>
            <person name="Mural R.J."/>
            <person name="Istrail S."/>
            <person name="Sutton G.G."/>
            <person name="Florea L."/>
            <person name="Halpern A.L."/>
            <person name="Mobarry C.M."/>
            <person name="Lippert R."/>
            <person name="Walenz B."/>
            <person name="Shatkay H."/>
            <person name="Dew I."/>
            <person name="Miller J.R."/>
            <person name="Flanigan M.J."/>
            <person name="Edwards N.J."/>
            <person name="Bolanos R."/>
            <person name="Fasulo D."/>
            <person name="Halldorsson B.V."/>
            <person name="Hannenhalli S."/>
            <person name="Turner R."/>
            <person name="Yooseph S."/>
            <person name="Lu F."/>
            <person name="Nusskern D.R."/>
            <person name="Shue B.C."/>
            <person name="Zheng X.H."/>
            <person name="Zhong F."/>
            <person name="Delcher A.L."/>
            <person name="Huson D.H."/>
            <person name="Kravitz S.A."/>
            <person name="Mouchard L."/>
            <person name="Reinert K."/>
            <person name="Remington K.A."/>
            <person name="Clark A.G."/>
            <person name="Waterman M.S."/>
            <person name="Eichler E.E."/>
            <person name="Adams M.D."/>
            <person name="Hunkapiller M.W."/>
            <person name="Myers E.W."/>
            <person name="Venter J.C."/>
        </authorList>
    </citation>
    <scope>NUCLEOTIDE SEQUENCE [LARGE SCALE GENOMIC DNA]</scope>
</reference>
<reference key="6">
    <citation type="journal article" date="2004" name="Genome Res.">
        <title>The status, quality, and expansion of the NIH full-length cDNA project: the Mammalian Gene Collection (MGC).</title>
        <authorList>
            <consortium name="The MGC Project Team"/>
        </authorList>
    </citation>
    <scope>NUCLEOTIDE SEQUENCE [LARGE SCALE MRNA] (ISOFORM 3)</scope>
    <source>
        <tissue>Blood</tissue>
    </source>
</reference>
<reference key="7">
    <citation type="submission" date="2007-07" db="UniProtKB">
        <authorList>
            <person name="Bienvenut W.V."/>
            <person name="Boldt K."/>
            <person name="von Kriegsheim A.F."/>
            <person name="Kolch W."/>
        </authorList>
    </citation>
    <scope>PROTEIN SEQUENCE OF 1-15; 226-234 AND 260-268</scope>
    <scope>ACETYLATION AT MET-1</scope>
    <scope>IDENTIFICATION BY MASS SPECTROMETRY</scope>
    <source>
        <tissue>Hepatoma</tissue>
    </source>
</reference>
<reference key="8">
    <citation type="journal article" date="2011" name="BMC Syst. Biol.">
        <title>Initial characterization of the human central proteome.</title>
        <authorList>
            <person name="Burkard T.R."/>
            <person name="Planyavsky M."/>
            <person name="Kaupe I."/>
            <person name="Breitwieser F.P."/>
            <person name="Buerckstuemmer T."/>
            <person name="Bennett K.L."/>
            <person name="Superti-Furga G."/>
            <person name="Colinge J."/>
        </authorList>
    </citation>
    <scope>IDENTIFICATION BY MASS SPECTROMETRY [LARGE SCALE ANALYSIS]</scope>
</reference>
<reference key="9">
    <citation type="journal article" date="2012" name="Mol. Cell. Proteomics">
        <title>Comparative large-scale characterisation of plant vs. mammal proteins reveals similar and idiosyncratic N-alpha acetylation features.</title>
        <authorList>
            <person name="Bienvenut W.V."/>
            <person name="Sumpton D."/>
            <person name="Martinez A."/>
            <person name="Lilla S."/>
            <person name="Espagne C."/>
            <person name="Meinnel T."/>
            <person name="Giglione C."/>
        </authorList>
    </citation>
    <scope>ACETYLATION [LARGE SCALE ANALYSIS] AT MET-1</scope>
    <scope>IDENTIFICATION BY MASS SPECTROMETRY [LARGE SCALE ANALYSIS]</scope>
</reference>
<reference key="10">
    <citation type="journal article" date="2012" name="Proc. Natl. Acad. Sci. U.S.A.">
        <title>N-terminal acetylome analyses and functional insights of the N-terminal acetyltransferase NatB.</title>
        <authorList>
            <person name="Van Damme P."/>
            <person name="Lasa M."/>
            <person name="Polevoda B."/>
            <person name="Gazquez C."/>
            <person name="Elosegui-Artola A."/>
            <person name="Kim D.S."/>
            <person name="De Juan-Pardo E."/>
            <person name="Demeyer K."/>
            <person name="Hole K."/>
            <person name="Larrea E."/>
            <person name="Timmerman E."/>
            <person name="Prieto J."/>
            <person name="Arnesen T."/>
            <person name="Sherman F."/>
            <person name="Gevaert K."/>
            <person name="Aldabe R."/>
        </authorList>
    </citation>
    <scope>ACETYLATION [LARGE SCALE ANALYSIS] AT MET-1</scope>
    <scope>IDENTIFICATION BY MASS SPECTROMETRY [LARGE SCALE ANALYSIS]</scope>
</reference>
<reference key="11">
    <citation type="journal article" date="2013" name="J. Proteome Res.">
        <title>Toward a comprehensive characterization of a human cancer cell phosphoproteome.</title>
        <authorList>
            <person name="Zhou H."/>
            <person name="Di Palma S."/>
            <person name="Preisinger C."/>
            <person name="Peng M."/>
            <person name="Polat A.N."/>
            <person name="Heck A.J."/>
            <person name="Mohammed S."/>
        </authorList>
    </citation>
    <scope>PHOSPHORYLATION [LARGE SCALE ANALYSIS] AT SER-260</scope>
    <scope>IDENTIFICATION BY MASS SPECTROMETRY [LARGE SCALE ANALYSIS]</scope>
    <source>
        <tissue>Erythroleukemia</tissue>
    </source>
</reference>
<reference key="12">
    <citation type="journal article" date="2014" name="J. Proteomics">
        <title>An enzyme assisted RP-RPLC approach for in-depth analysis of human liver phosphoproteome.</title>
        <authorList>
            <person name="Bian Y."/>
            <person name="Song C."/>
            <person name="Cheng K."/>
            <person name="Dong M."/>
            <person name="Wang F."/>
            <person name="Huang J."/>
            <person name="Sun D."/>
            <person name="Wang L."/>
            <person name="Ye M."/>
            <person name="Zou H."/>
        </authorList>
    </citation>
    <scope>IDENTIFICATION BY MASS SPECTROMETRY [LARGE SCALE ANALYSIS]</scope>
    <source>
        <tissue>Liver</tissue>
    </source>
</reference>
<reference key="13">
    <citation type="journal article" date="2015" name="Science">
        <title>Stress responses. Mutations in a translation initiation factor identify the target of a memory-enhancing compound.</title>
        <authorList>
            <person name="Sekine Y."/>
            <person name="Zyryanova A."/>
            <person name="Crespillo-Casado A."/>
            <person name="Fischer P.M."/>
            <person name="Harding H.P."/>
            <person name="Ron D."/>
        </authorList>
    </citation>
    <scope>FUNCTION</scope>
    <scope>ACTIVITY REGULATION</scope>
    <scope>IDENTIFICATION BY MASS SPECTROMETRY</scope>
    <scope>IDENTIFICATION IN THE EIF2B COMPLEX</scope>
</reference>
<reference key="14">
    <citation type="journal article" date="2016" name="J. Struct. Funct. Genomics">
        <title>Expression, purification, and crystallization of Schizosaccharomyces pombe eIF2B.</title>
        <authorList>
            <person name="Kashiwagi K."/>
            <person name="Shigeta T."/>
            <person name="Imataka H."/>
            <person name="Ito T."/>
            <person name="Yokoyama S."/>
        </authorList>
    </citation>
    <scope>FUNCTION</scope>
    <scope>IDENTIFICATION IN THE EIF2B COMPLEX</scope>
</reference>
<reference evidence="12 13" key="15">
    <citation type="journal article" date="2019" name="Science">
        <title>Structural basis for eIF2B inhibition in integrated stress response.</title>
        <authorList>
            <person name="Kashiwagi K."/>
            <person name="Yokoyama T."/>
            <person name="Nishimoto M."/>
            <person name="Takahashi M."/>
            <person name="Sakamoto A."/>
            <person name="Yonemochi M."/>
            <person name="Shirouzu M."/>
            <person name="Ito T."/>
        </authorList>
    </citation>
    <scope>STRUCTURE BY ELECTRON MICROSCOPY (4.30 ANGSTROMS) IN COMPLEX WITH THE EIF2 COMPLEX</scope>
    <scope>FUNCTION</scope>
    <scope>SUBUNIT</scope>
    <scope>IDENTIFICATION IN THE EIF2B COMPLEX</scope>
</reference>
<reference key="16">
    <citation type="journal article" date="2002" name="Ann. Neurol.">
        <title>Mutations in each of the five subunits of translation initiation factor eIF2B can cause leukoencephalopathy with vanishing white matter.</title>
        <authorList>
            <person name="van der Knaap M.S."/>
            <person name="Leegwater P.A.J."/>
            <person name="Koenst A.A.M."/>
            <person name="Visser A."/>
            <person name="Naidu S."/>
            <person name="Oudejans C.B.M."/>
            <person name="Schutgens R.B.H."/>
            <person name="Pronk J.C."/>
        </authorList>
    </citation>
    <scope>VARIANTS VWM3 VAL-87 AND GLN-225</scope>
</reference>
<reference key="17">
    <citation type="journal article" date="2009" name="J. Hum. Genet.">
        <title>Identification of novel EIF2B mutations in Chinese patients with vanishing white matter disease.</title>
        <authorList>
            <person name="Wu Y."/>
            <person name="Pan Y."/>
            <person name="Du L."/>
            <person name="Wang J."/>
            <person name="Gu Q."/>
            <person name="Gao Z."/>
            <person name="Li J."/>
            <person name="Leng X."/>
            <person name="Qin J."/>
            <person name="Wu X."/>
            <person name="Jiang Y."/>
        </authorList>
    </citation>
    <scope>VARIANTS VWM3 GLU-47; GLN-225 AND THR-346</scope>
</reference>
<reference key="18">
    <citation type="journal article" date="2011" name="Neurogenetics">
        <title>Adult-onset leukoencephalopathies with vanishing white matter with novel missense mutations in EIF2B2, EIF2B3, and EIF2B5.</title>
        <authorList>
            <person name="Matsukawa T."/>
            <person name="Wang X."/>
            <person name="Liu R."/>
            <person name="Wortham N.C."/>
            <person name="Onuki Y."/>
            <person name="Kubota A."/>
            <person name="Hida A."/>
            <person name="Kowa H."/>
            <person name="Fukuda Y."/>
            <person name="Ishiura H."/>
            <person name="Mitsui J."/>
            <person name="Takahashi Y."/>
            <person name="Aoki S."/>
            <person name="Takizawa S."/>
            <person name="Shimizu J."/>
            <person name="Goto J."/>
            <person name="Proud C.G."/>
            <person name="Tsuji S."/>
        </authorList>
    </citation>
    <scope>VARIANT VWM3 GLN-27</scope>
</reference>
<protein>
    <recommendedName>
        <fullName>Translation initiation factor eIF2B subunit gamma</fullName>
    </recommendedName>
    <alternativeName>
        <fullName>eIF2B GDP-GTP exchange factor subunit gamma</fullName>
    </alternativeName>
</protein>
<dbReference type="EMBL" id="AF257077">
    <property type="protein sequence ID" value="AAF91351.1"/>
    <property type="molecule type" value="mRNA"/>
</dbReference>
<dbReference type="EMBL" id="AK024006">
    <property type="protein sequence ID" value="BAB14770.1"/>
    <property type="molecule type" value="mRNA"/>
</dbReference>
<dbReference type="EMBL" id="AK314668">
    <property type="protein sequence ID" value="BAG37225.1"/>
    <property type="molecule type" value="mRNA"/>
</dbReference>
<dbReference type="EMBL" id="AL834288">
    <property type="protein sequence ID" value="CAD38962.1"/>
    <property type="molecule type" value="mRNA"/>
</dbReference>
<dbReference type="EMBL" id="AL136380">
    <property type="status" value="NOT_ANNOTATED_CDS"/>
    <property type="molecule type" value="Genomic_DNA"/>
</dbReference>
<dbReference type="EMBL" id="CH471059">
    <property type="protein sequence ID" value="EAX07013.1"/>
    <property type="molecule type" value="Genomic_DNA"/>
</dbReference>
<dbReference type="EMBL" id="CH471059">
    <property type="protein sequence ID" value="EAX07015.1"/>
    <property type="molecule type" value="Genomic_DNA"/>
</dbReference>
<dbReference type="EMBL" id="BC018728">
    <property type="protein sequence ID" value="AAH18728.1"/>
    <property type="molecule type" value="mRNA"/>
</dbReference>
<dbReference type="CCDS" id="CCDS517.1">
    <molecule id="Q9NR50-1"/>
</dbReference>
<dbReference type="CCDS" id="CCDS53313.1">
    <molecule id="Q9NR50-2"/>
</dbReference>
<dbReference type="CCDS" id="CCDS72775.1">
    <molecule id="Q9NR50-3"/>
</dbReference>
<dbReference type="RefSeq" id="NP_001160060.1">
    <molecule id="Q9NR50-2"/>
    <property type="nucleotide sequence ID" value="NM_001166588.3"/>
</dbReference>
<dbReference type="RefSeq" id="NP_001248347.1">
    <molecule id="Q9NR50-3"/>
    <property type="nucleotide sequence ID" value="NM_001261418.2"/>
</dbReference>
<dbReference type="RefSeq" id="NP_065098.1">
    <molecule id="Q9NR50-1"/>
    <property type="nucleotide sequence ID" value="NM_020365.5"/>
</dbReference>
<dbReference type="PDB" id="6CAJ">
    <property type="method" value="EM"/>
    <property type="resolution" value="2.80 A"/>
    <property type="chains" value="I/J=1-452"/>
</dbReference>
<dbReference type="PDB" id="6EZO">
    <property type="method" value="EM"/>
    <property type="resolution" value="4.10 A"/>
    <property type="chains" value="E/F=1-452"/>
</dbReference>
<dbReference type="PDB" id="6K71">
    <property type="method" value="EM"/>
    <property type="resolution" value="4.30 A"/>
    <property type="chains" value="E/F=1-452"/>
</dbReference>
<dbReference type="PDB" id="6K72">
    <property type="method" value="EM"/>
    <property type="resolution" value="4.60 A"/>
    <property type="chains" value="E/F=1-452"/>
</dbReference>
<dbReference type="PDB" id="6O81">
    <property type="method" value="EM"/>
    <property type="resolution" value="3.21 A"/>
    <property type="chains" value="I/J=1-452"/>
</dbReference>
<dbReference type="PDB" id="6O85">
    <property type="method" value="EM"/>
    <property type="resolution" value="3.03 A"/>
    <property type="chains" value="I/J=1-452"/>
</dbReference>
<dbReference type="PDB" id="6O9Z">
    <property type="method" value="EM"/>
    <property type="resolution" value="3.03 A"/>
    <property type="chains" value="I/J=1-452"/>
</dbReference>
<dbReference type="PDB" id="7D43">
    <property type="method" value="EM"/>
    <property type="resolution" value="4.30 A"/>
    <property type="chains" value="E/F=1-452"/>
</dbReference>
<dbReference type="PDB" id="7D44">
    <property type="method" value="EM"/>
    <property type="resolution" value="4.00 A"/>
    <property type="chains" value="E/F=1-452"/>
</dbReference>
<dbReference type="PDB" id="7D45">
    <property type="method" value="EM"/>
    <property type="resolution" value="3.80 A"/>
    <property type="chains" value="E/F=1-452"/>
</dbReference>
<dbReference type="PDB" id="7D46">
    <property type="method" value="EM"/>
    <property type="resolution" value="4.00 A"/>
    <property type="chains" value="E/F=1-452"/>
</dbReference>
<dbReference type="PDB" id="7F64">
    <property type="method" value="EM"/>
    <property type="resolution" value="2.42 A"/>
    <property type="chains" value="E/F=1-452"/>
</dbReference>
<dbReference type="PDB" id="7F66">
    <property type="method" value="EM"/>
    <property type="resolution" value="2.76 A"/>
    <property type="chains" value="E/F=1-452"/>
</dbReference>
<dbReference type="PDB" id="7F67">
    <property type="method" value="EM"/>
    <property type="resolution" value="3.59 A"/>
    <property type="chains" value="E/F=1-452"/>
</dbReference>
<dbReference type="PDB" id="7KMF">
    <property type="method" value="EM"/>
    <property type="resolution" value="2.91 A"/>
    <property type="chains" value="J/K=1-452"/>
</dbReference>
<dbReference type="PDB" id="7L70">
    <property type="method" value="EM"/>
    <property type="resolution" value="2.80 A"/>
    <property type="chains" value="I/J=1-452"/>
</dbReference>
<dbReference type="PDB" id="7L7G">
    <property type="method" value="EM"/>
    <property type="resolution" value="3.00 A"/>
    <property type="chains" value="I/J=1-452"/>
</dbReference>
<dbReference type="PDB" id="7RLO">
    <property type="method" value="EM"/>
    <property type="resolution" value="2.60 A"/>
    <property type="chains" value="I/J=1-452"/>
</dbReference>
<dbReference type="PDB" id="7TRJ">
    <property type="method" value="EM"/>
    <property type="resolution" value="2.80 A"/>
    <property type="chains" value="I/J=1-452"/>
</dbReference>
<dbReference type="PDB" id="7VLK">
    <property type="method" value="EM"/>
    <property type="resolution" value="2.27 A"/>
    <property type="chains" value="E/F=1-452"/>
</dbReference>
<dbReference type="PDB" id="8TQO">
    <property type="method" value="EM"/>
    <property type="resolution" value="3.10 A"/>
    <property type="chains" value="I=1-452"/>
</dbReference>
<dbReference type="PDB" id="8TQZ">
    <property type="method" value="EM"/>
    <property type="resolution" value="2.90 A"/>
    <property type="chains" value="I/J=1-452"/>
</dbReference>
<dbReference type="PDBsum" id="6CAJ"/>
<dbReference type="PDBsum" id="6EZO"/>
<dbReference type="PDBsum" id="6K71"/>
<dbReference type="PDBsum" id="6K72"/>
<dbReference type="PDBsum" id="6O81"/>
<dbReference type="PDBsum" id="6O85"/>
<dbReference type="PDBsum" id="6O9Z"/>
<dbReference type="PDBsum" id="7D43"/>
<dbReference type="PDBsum" id="7D44"/>
<dbReference type="PDBsum" id="7D45"/>
<dbReference type="PDBsum" id="7D46"/>
<dbReference type="PDBsum" id="7F64"/>
<dbReference type="PDBsum" id="7F66"/>
<dbReference type="PDBsum" id="7F67"/>
<dbReference type="PDBsum" id="7KMF"/>
<dbReference type="PDBsum" id="7L70"/>
<dbReference type="PDBsum" id="7L7G"/>
<dbReference type="PDBsum" id="7RLO"/>
<dbReference type="PDBsum" id="7TRJ"/>
<dbReference type="PDBsum" id="7VLK"/>
<dbReference type="PDBsum" id="8TQO"/>
<dbReference type="PDBsum" id="8TQZ"/>
<dbReference type="EMDB" id="EMD-0649"/>
<dbReference type="EMDB" id="EMD-0651"/>
<dbReference type="EMDB" id="EMD-0664"/>
<dbReference type="EMDB" id="EMD-22924"/>
<dbReference type="EMDB" id="EMD-23209"/>
<dbReference type="EMDB" id="EMD-24535"/>
<dbReference type="EMDB" id="EMD-26098"/>
<dbReference type="EMDB" id="EMD-30568"/>
<dbReference type="EMDB" id="EMD-30569"/>
<dbReference type="EMDB" id="EMD-30570"/>
<dbReference type="EMDB" id="EMD-30571"/>
<dbReference type="EMDB" id="EMD-31472"/>
<dbReference type="EMDB" id="EMD-31474"/>
<dbReference type="EMDB" id="EMD-31475"/>
<dbReference type="EMDB" id="EMD-32023"/>
<dbReference type="EMDB" id="EMD-41510"/>
<dbReference type="EMDB" id="EMD-41566"/>
<dbReference type="EMDB" id="EMD-4162"/>
<dbReference type="EMDB" id="EMD-7442"/>
<dbReference type="EMDB" id="EMD-9842"/>
<dbReference type="SMR" id="Q9NR50"/>
<dbReference type="BioGRID" id="114408">
    <property type="interactions" value="132"/>
</dbReference>
<dbReference type="ComplexPortal" id="CPX-8343">
    <property type="entry name" value="Eukaryotic translation initiation factor 2B complex"/>
</dbReference>
<dbReference type="CORUM" id="Q9NR50"/>
<dbReference type="FunCoup" id="Q9NR50">
    <property type="interactions" value="2682"/>
</dbReference>
<dbReference type="IntAct" id="Q9NR50">
    <property type="interactions" value="75"/>
</dbReference>
<dbReference type="MINT" id="Q9NR50"/>
<dbReference type="STRING" id="9606.ENSP00000353575"/>
<dbReference type="ChEMBL" id="CHEMBL4295961"/>
<dbReference type="GlyGen" id="Q9NR50">
    <property type="glycosylation" value="1 site, 1 O-linked glycan (1 site)"/>
</dbReference>
<dbReference type="iPTMnet" id="Q9NR50"/>
<dbReference type="MetOSite" id="Q9NR50"/>
<dbReference type="PhosphoSitePlus" id="Q9NR50"/>
<dbReference type="SwissPalm" id="Q9NR50"/>
<dbReference type="BioMuta" id="EIF2B3"/>
<dbReference type="DMDM" id="18203317"/>
<dbReference type="REPRODUCTION-2DPAGE" id="IPI00006504"/>
<dbReference type="jPOST" id="Q9NR50"/>
<dbReference type="MassIVE" id="Q9NR50"/>
<dbReference type="PaxDb" id="9606-ENSP00000353575"/>
<dbReference type="PeptideAtlas" id="Q9NR50"/>
<dbReference type="ProteomicsDB" id="82275">
    <molecule id="Q9NR50-1"/>
</dbReference>
<dbReference type="ProteomicsDB" id="82276">
    <molecule id="Q9NR50-2"/>
</dbReference>
<dbReference type="ProteomicsDB" id="82277">
    <molecule id="Q9NR50-3"/>
</dbReference>
<dbReference type="Pumba" id="Q9NR50"/>
<dbReference type="Antibodypedia" id="18525">
    <property type="antibodies" value="293 antibodies from 27 providers"/>
</dbReference>
<dbReference type="DNASU" id="8891"/>
<dbReference type="Ensembl" id="ENST00000360403.7">
    <molecule id="Q9NR50-1"/>
    <property type="protein sequence ID" value="ENSP00000353575.2"/>
    <property type="gene ID" value="ENSG00000070785.17"/>
</dbReference>
<dbReference type="Ensembl" id="ENST00000372183.7">
    <molecule id="Q9NR50-2"/>
    <property type="protein sequence ID" value="ENSP00000361257.3"/>
    <property type="gene ID" value="ENSG00000070785.17"/>
</dbReference>
<dbReference type="Ensembl" id="ENST00000620860.4">
    <molecule id="Q9NR50-3"/>
    <property type="protein sequence ID" value="ENSP00000483996.1"/>
    <property type="gene ID" value="ENSG00000070785.17"/>
</dbReference>
<dbReference type="GeneID" id="8891"/>
<dbReference type="KEGG" id="hsa:8891"/>
<dbReference type="MANE-Select" id="ENST00000360403.7">
    <property type="protein sequence ID" value="ENSP00000353575.2"/>
    <property type="RefSeq nucleotide sequence ID" value="NM_020365.5"/>
    <property type="RefSeq protein sequence ID" value="NP_065098.1"/>
</dbReference>
<dbReference type="UCSC" id="uc001cmt.4">
    <molecule id="Q9NR50-1"/>
    <property type="organism name" value="human"/>
</dbReference>
<dbReference type="AGR" id="HGNC:3259"/>
<dbReference type="CTD" id="8891"/>
<dbReference type="DisGeNET" id="8891"/>
<dbReference type="GeneCards" id="EIF2B3"/>
<dbReference type="GeneReviews" id="EIF2B3"/>
<dbReference type="HGNC" id="HGNC:3259">
    <property type="gene designation" value="EIF2B3"/>
</dbReference>
<dbReference type="HPA" id="ENSG00000070785">
    <property type="expression patterns" value="Low tissue specificity"/>
</dbReference>
<dbReference type="MalaCards" id="EIF2B3"/>
<dbReference type="MIM" id="606273">
    <property type="type" value="gene"/>
</dbReference>
<dbReference type="MIM" id="620313">
    <property type="type" value="phenotype"/>
</dbReference>
<dbReference type="neXtProt" id="NX_Q9NR50"/>
<dbReference type="OpenTargets" id="ENSG00000070785"/>
<dbReference type="Orphanet" id="157713">
    <property type="disease" value="Congenital or early infantile CACH syndrome"/>
</dbReference>
<dbReference type="Orphanet" id="99854">
    <property type="disease" value="Cree leukoencephalopathy"/>
</dbReference>
<dbReference type="Orphanet" id="157719">
    <property type="disease" value="Juvenile or adult CACH syndrome"/>
</dbReference>
<dbReference type="Orphanet" id="157716">
    <property type="disease" value="Late infantile CACH syndrome"/>
</dbReference>
<dbReference type="Orphanet" id="99853">
    <property type="disease" value="Ovarioleukodystrophy"/>
</dbReference>
<dbReference type="PharmGKB" id="PA27690"/>
<dbReference type="VEuPathDB" id="HostDB:ENSG00000070785"/>
<dbReference type="eggNOG" id="KOG1462">
    <property type="taxonomic scope" value="Eukaryota"/>
</dbReference>
<dbReference type="GeneTree" id="ENSGT00510000047486"/>
<dbReference type="HOGENOM" id="CLU_016743_0_0_1"/>
<dbReference type="InParanoid" id="Q9NR50"/>
<dbReference type="OMA" id="NCVINPK"/>
<dbReference type="OrthoDB" id="10250549at2759"/>
<dbReference type="PAN-GO" id="Q9NR50">
    <property type="GO annotations" value="3 GO annotations based on evolutionary models"/>
</dbReference>
<dbReference type="PhylomeDB" id="Q9NR50"/>
<dbReference type="TreeFam" id="TF101507"/>
<dbReference type="PathwayCommons" id="Q9NR50"/>
<dbReference type="Reactome" id="R-HSA-72731">
    <property type="pathway name" value="Recycling of eIF2:GDP"/>
</dbReference>
<dbReference type="SignaLink" id="Q9NR50"/>
<dbReference type="SIGNOR" id="Q9NR50"/>
<dbReference type="BioGRID-ORCS" id="8891">
    <property type="hits" value="816 hits in 1172 CRISPR screens"/>
</dbReference>
<dbReference type="ChiTaRS" id="EIF2B3">
    <property type="organism name" value="human"/>
</dbReference>
<dbReference type="GeneWiki" id="EIF2B3"/>
<dbReference type="GenomeRNAi" id="8891"/>
<dbReference type="Pharos" id="Q9NR50">
    <property type="development level" value="Tbio"/>
</dbReference>
<dbReference type="PRO" id="PR:Q9NR50"/>
<dbReference type="Proteomes" id="UP000005640">
    <property type="component" value="Chromosome 1"/>
</dbReference>
<dbReference type="RNAct" id="Q9NR50">
    <property type="molecule type" value="protein"/>
</dbReference>
<dbReference type="Bgee" id="ENSG00000070785">
    <property type="expression patterns" value="Expressed in triceps brachii and 196 other cell types or tissues"/>
</dbReference>
<dbReference type="ExpressionAtlas" id="Q9NR50">
    <property type="expression patterns" value="baseline and differential"/>
</dbReference>
<dbReference type="GO" id="GO:0005737">
    <property type="term" value="C:cytoplasm"/>
    <property type="evidence" value="ECO:0000314"/>
    <property type="project" value="UniProtKB"/>
</dbReference>
<dbReference type="GO" id="GO:0005829">
    <property type="term" value="C:cytosol"/>
    <property type="evidence" value="ECO:0000304"/>
    <property type="project" value="Reactome"/>
</dbReference>
<dbReference type="GO" id="GO:0005851">
    <property type="term" value="C:eukaryotic translation initiation factor 2B complex"/>
    <property type="evidence" value="ECO:0000314"/>
    <property type="project" value="UniProtKB"/>
</dbReference>
<dbReference type="GO" id="GO:0032045">
    <property type="term" value="C:guanyl-nucleotide exchange factor complex"/>
    <property type="evidence" value="ECO:0000318"/>
    <property type="project" value="GO_Central"/>
</dbReference>
<dbReference type="GO" id="GO:0005085">
    <property type="term" value="F:guanyl-nucleotide exchange factor activity"/>
    <property type="evidence" value="ECO:0000314"/>
    <property type="project" value="UniProtKB"/>
</dbReference>
<dbReference type="GO" id="GO:0003743">
    <property type="term" value="F:translation initiation factor activity"/>
    <property type="evidence" value="ECO:0007669"/>
    <property type="project" value="UniProtKB-KW"/>
</dbReference>
<dbReference type="GO" id="GO:0002183">
    <property type="term" value="P:cytoplasmic translational initiation"/>
    <property type="evidence" value="ECO:0000314"/>
    <property type="project" value="UniProtKB"/>
</dbReference>
<dbReference type="GO" id="GO:0014003">
    <property type="term" value="P:oligodendrocyte development"/>
    <property type="evidence" value="ECO:0000315"/>
    <property type="project" value="UniProtKB"/>
</dbReference>
<dbReference type="GO" id="GO:0009749">
    <property type="term" value="P:response to glucose"/>
    <property type="evidence" value="ECO:0000250"/>
    <property type="project" value="UniProtKB"/>
</dbReference>
<dbReference type="GO" id="GO:0009408">
    <property type="term" value="P:response to heat"/>
    <property type="evidence" value="ECO:0000250"/>
    <property type="project" value="UniProtKB"/>
</dbReference>
<dbReference type="GO" id="GO:0043434">
    <property type="term" value="P:response to peptide hormone"/>
    <property type="evidence" value="ECO:0000250"/>
    <property type="project" value="UniProtKB"/>
</dbReference>
<dbReference type="GO" id="GO:0050852">
    <property type="term" value="P:T cell receptor signaling pathway"/>
    <property type="evidence" value="ECO:0000314"/>
    <property type="project" value="UniProtKB"/>
</dbReference>
<dbReference type="GO" id="GO:0006413">
    <property type="term" value="P:translational initiation"/>
    <property type="evidence" value="ECO:0000314"/>
    <property type="project" value="UniProtKB"/>
</dbReference>
<dbReference type="CDD" id="cd04198">
    <property type="entry name" value="eIF-2B_gamma_N"/>
    <property type="match status" value="1"/>
</dbReference>
<dbReference type="CDD" id="cd04652">
    <property type="entry name" value="LbH_eIF2B_gamma_C"/>
    <property type="match status" value="1"/>
</dbReference>
<dbReference type="FunFam" id="2.160.10.10:FF:000031">
    <property type="entry name" value="Translation initiation factor eIF-2B subunit gamma"/>
    <property type="match status" value="1"/>
</dbReference>
<dbReference type="FunFam" id="3.90.550.10:FF:000105">
    <property type="entry name" value="translation initiation factor eIF-2B subunit gamma"/>
    <property type="match status" value="1"/>
</dbReference>
<dbReference type="Gene3D" id="2.160.10.10">
    <property type="entry name" value="Hexapeptide repeat proteins"/>
    <property type="match status" value="1"/>
</dbReference>
<dbReference type="Gene3D" id="3.90.550.10">
    <property type="entry name" value="Spore Coat Polysaccharide Biosynthesis Protein SpsA, Chain A"/>
    <property type="match status" value="1"/>
</dbReference>
<dbReference type="InterPro" id="IPR051960">
    <property type="entry name" value="eIF2B_gamma"/>
</dbReference>
<dbReference type="InterPro" id="IPR005835">
    <property type="entry name" value="NTP_transferase_dom"/>
</dbReference>
<dbReference type="InterPro" id="IPR029044">
    <property type="entry name" value="Nucleotide-diphossugar_trans"/>
</dbReference>
<dbReference type="PANTHER" id="PTHR45989">
    <property type="entry name" value="TRANSLATION INITIATION FACTOR EIF-2B SUBUNIT GAMMA"/>
    <property type="match status" value="1"/>
</dbReference>
<dbReference type="PANTHER" id="PTHR45989:SF1">
    <property type="entry name" value="TRANSLATION INITIATION FACTOR EIF-2B SUBUNIT GAMMA"/>
    <property type="match status" value="1"/>
</dbReference>
<dbReference type="Pfam" id="PF25084">
    <property type="entry name" value="LbH_EIF2B"/>
    <property type="match status" value="1"/>
</dbReference>
<dbReference type="Pfam" id="PF00483">
    <property type="entry name" value="NTP_transferase"/>
    <property type="match status" value="1"/>
</dbReference>
<dbReference type="SUPFAM" id="SSF53448">
    <property type="entry name" value="Nucleotide-diphospho-sugar transferases"/>
    <property type="match status" value="1"/>
</dbReference>
<proteinExistence type="evidence at protein level"/>
<keyword id="KW-0002">3D-structure</keyword>
<keyword id="KW-0007">Acetylation</keyword>
<keyword id="KW-0025">Alternative splicing</keyword>
<keyword id="KW-0963">Cytoplasm</keyword>
<keyword id="KW-0903">Direct protein sequencing</keyword>
<keyword id="KW-0225">Disease variant</keyword>
<keyword id="KW-0396">Initiation factor</keyword>
<keyword id="KW-1026">Leukodystrophy</keyword>
<keyword id="KW-0597">Phosphoprotein</keyword>
<keyword id="KW-0648">Protein biosynthesis</keyword>
<keyword id="KW-1267">Proteomics identification</keyword>
<keyword id="KW-1185">Reference proteome</keyword>
<accession>Q9NR50</accession>
<accession>B2RBH8</accession>
<accession>D3DPZ2</accession>
<accession>Q5QP89</accession>
<accession>Q5QP90</accession>
<accession>Q8NDB5</accession>
<accession>Q8WV57</accession>
<accession>Q9H850</accession>
<sequence>MEFQAVVMAVGGGSRMTDLTSSIPKPLLPVGNKPLIWYPLNLLERVGFEEVIVVTTRDVQKALCAEFKMKMKPDIVCIPDDADMGTADSLRYIYPKLKTDVLVLSCDLITDVALHEVVDLFRAYDASLAMLMRKGQDSIEPVPGQKGKKKAVEQRDFIGVDSTGKRLLFMANEADLDEELVIKGSILQKHPRIRFHTGLVDAHLYCLKKYIVDFLMENGSITSIRSELIPYLVRKQFSSASSQQGQEEKEEDLKKKELKSLDIYSFIKEANTLNLAPYDACWNACRGDRWEDLSRSQVRCYVHIMKEGLCSRVSTLGLYMEANRQVPKLLSALCPEEPPVHSSAQIVSKHLVGVDSLIGPETQIGEKSSIKRSVIGSSCLIKDRVTITNCLLMNSVTVEEGSNIQGSVICNNAVIEKGADIKDCLIGSGQRIEAKAKRVNEVIVGNDQLMEI</sequence>
<comment type="function">
    <text evidence="5 6 7">Acts as a component of the translation initiation factor 2B (eIF2B) complex, which catalyzes the exchange of GDP for GTP on the eukaryotic initiation factor 2 (eIF2) complex gamma subunit (PubMed:25858979, PubMed:27023709, PubMed:31048492). Its guanine nucleotide exchange factor activity is repressed when bound to eIF2 complex phosphorylated on the alpha subunit, thereby limiting the amount of methionyl-initiator methionine tRNA available to the ribosome and consequently global translation is repressed (PubMed:25858979, PubMed:31048492).</text>
</comment>
<comment type="activity regulation">
    <text evidence="5">Activated by the chemical integrated stress response (ISR) inhibitor ISRIB which stimulates guanine nucleotide exchange factor activity for both phosphorylated and unphosphorylated eIF2.</text>
</comment>
<comment type="subunit">
    <text evidence="5 6 7">Component of the translation initiation factor 2B (eIF2B) complex which is a heterodecamer of two sets of five different subunits: alpha, beta, gamma, delta and epsilon. Subunits alpha, beta and delta comprise a regulatory subcomplex and subunits epsilon and gamma comprise a catalytic subcomplex (PubMed:25858979, PubMed:27023709, PubMed:31048492). Within the complex, the hexameric regulatory complex resides at the center, with the two heterodimeric catalytic subcomplexes bound on opposite sides (PubMed:31048492).</text>
</comment>
<comment type="subcellular location">
    <subcellularLocation>
        <location evidence="1">Cytoplasm</location>
        <location evidence="1">Cytosol</location>
    </subcellularLocation>
</comment>
<comment type="alternative products">
    <event type="alternative splicing"/>
    <isoform>
        <id>Q9NR50-1</id>
        <name>1</name>
        <sequence type="displayed"/>
    </isoform>
    <isoform>
        <id>Q9NR50-2</id>
        <name>2</name>
        <sequence type="described" ref="VSP_001436"/>
    </isoform>
    <isoform>
        <id>Q9NR50-3</id>
        <name>3</name>
        <sequence type="described" ref="VSP_001435"/>
    </isoform>
    <text>Experimental confirmation may be lacking for some isoforms.</text>
</comment>
<comment type="disease" evidence="2 3 4">
    <disease id="DI-06649">
        <name>Leukoencephalopathy with vanishing white matter 3</name>
        <acronym>VWM3</acronym>
        <description>An autosomal recessive brain disease characterized by neurological features including progressive cerebellar ataxia, spasticity, and cognitive deficits. Brain imaging shows abnormal white matter that vanishes over time and is replaced by cerebrospinal fluid. Disease severity ranges from fatal infantile forms to adult forms without neurological deterioration. The disease is progressive with, in most individuals, additional episodes of rapid deterioration following febrile infections or minor head trauma. Death may occurs after a variable period after disease onset, usually following an episode of fever and coma. A subset of affected females with milder forms of the disease who survive to adolescence exhibit ovarian dysfunction. This variant of the disorder is called ovarioleukodystrophy.</description>
        <dbReference type="MIM" id="620313"/>
    </disease>
    <text>The disease is caused by variants affecting the gene represented in this entry.</text>
</comment>
<comment type="similarity">
    <text evidence="11">Belongs to the eIF-2B gamma/epsilon subunits family.</text>
</comment>
<comment type="online information" name="Mendelian genes eukaryotic translation initiation factor 2B, subunit 3 gamma, 58kDa (EIF2B3)">
    <link uri="https://databases.lovd.nl/shared/genes/EIF2B3"/>
    <text>Leiden Open Variation Database (LOVD)</text>
</comment>
<name>EI2BG_HUMAN</name>
<organism>
    <name type="scientific">Homo sapiens</name>
    <name type="common">Human</name>
    <dbReference type="NCBI Taxonomy" id="9606"/>
    <lineage>
        <taxon>Eukaryota</taxon>
        <taxon>Metazoa</taxon>
        <taxon>Chordata</taxon>
        <taxon>Craniata</taxon>
        <taxon>Vertebrata</taxon>
        <taxon>Euteleostomi</taxon>
        <taxon>Mammalia</taxon>
        <taxon>Eutheria</taxon>
        <taxon>Euarchontoglires</taxon>
        <taxon>Primates</taxon>
        <taxon>Haplorrhini</taxon>
        <taxon>Catarrhini</taxon>
        <taxon>Hominidae</taxon>
        <taxon>Homo</taxon>
    </lineage>
</organism>